<keyword id="KW-0028">Amino-acid biosynthesis</keyword>
<keyword id="KW-0055">Arginine biosynthesis</keyword>
<keyword id="KW-0067">ATP-binding</keyword>
<keyword id="KW-0436">Ligase</keyword>
<keyword id="KW-0460">Magnesium</keyword>
<keyword id="KW-0464">Manganese</keyword>
<keyword id="KW-0479">Metal-binding</keyword>
<keyword id="KW-0547">Nucleotide-binding</keyword>
<keyword id="KW-0665">Pyrimidine biosynthesis</keyword>
<keyword id="KW-1185">Reference proteome</keyword>
<keyword id="KW-0677">Repeat</keyword>
<proteinExistence type="inferred from homology"/>
<name>CARB_ECO57</name>
<protein>
    <recommendedName>
        <fullName evidence="2">Carbamoyl phosphate synthase large chain</fullName>
        <ecNumber evidence="2">6.3.4.16</ecNumber>
        <ecNumber evidence="2">6.3.5.5</ecNumber>
    </recommendedName>
    <alternativeName>
        <fullName evidence="2">Carbamoyl phosphate synthetase ammonia chain</fullName>
    </alternativeName>
</protein>
<reference key="1">
    <citation type="journal article" date="2001" name="Nature">
        <title>Genome sequence of enterohaemorrhagic Escherichia coli O157:H7.</title>
        <authorList>
            <person name="Perna N.T."/>
            <person name="Plunkett G. III"/>
            <person name="Burland V."/>
            <person name="Mau B."/>
            <person name="Glasner J.D."/>
            <person name="Rose D.J."/>
            <person name="Mayhew G.F."/>
            <person name="Evans P.S."/>
            <person name="Gregor J."/>
            <person name="Kirkpatrick H.A."/>
            <person name="Posfai G."/>
            <person name="Hackett J."/>
            <person name="Klink S."/>
            <person name="Boutin A."/>
            <person name="Shao Y."/>
            <person name="Miller L."/>
            <person name="Grotbeck E.J."/>
            <person name="Davis N.W."/>
            <person name="Lim A."/>
            <person name="Dimalanta E.T."/>
            <person name="Potamousis K."/>
            <person name="Apodaca J."/>
            <person name="Anantharaman T.S."/>
            <person name="Lin J."/>
            <person name="Yen G."/>
            <person name="Schwartz D.C."/>
            <person name="Welch R.A."/>
            <person name="Blattner F.R."/>
        </authorList>
    </citation>
    <scope>NUCLEOTIDE SEQUENCE [LARGE SCALE GENOMIC DNA]</scope>
    <source>
        <strain>O157:H7 / EDL933 / ATCC 700927 / EHEC</strain>
    </source>
</reference>
<reference key="2">
    <citation type="journal article" date="2001" name="DNA Res.">
        <title>Complete genome sequence of enterohemorrhagic Escherichia coli O157:H7 and genomic comparison with a laboratory strain K-12.</title>
        <authorList>
            <person name="Hayashi T."/>
            <person name="Makino K."/>
            <person name="Ohnishi M."/>
            <person name="Kurokawa K."/>
            <person name="Ishii K."/>
            <person name="Yokoyama K."/>
            <person name="Han C.-G."/>
            <person name="Ohtsubo E."/>
            <person name="Nakayama K."/>
            <person name="Murata T."/>
            <person name="Tanaka M."/>
            <person name="Tobe T."/>
            <person name="Iida T."/>
            <person name="Takami H."/>
            <person name="Honda T."/>
            <person name="Sasakawa C."/>
            <person name="Ogasawara N."/>
            <person name="Yasunaga T."/>
            <person name="Kuhara S."/>
            <person name="Shiba T."/>
            <person name="Hattori M."/>
            <person name="Shinagawa H."/>
        </authorList>
    </citation>
    <scope>NUCLEOTIDE SEQUENCE [LARGE SCALE GENOMIC DNA]</scope>
    <source>
        <strain>O157:H7 / Sakai / RIMD 0509952 / EHEC</strain>
    </source>
</reference>
<organism>
    <name type="scientific">Escherichia coli O157:H7</name>
    <dbReference type="NCBI Taxonomy" id="83334"/>
    <lineage>
        <taxon>Bacteria</taxon>
        <taxon>Pseudomonadati</taxon>
        <taxon>Pseudomonadota</taxon>
        <taxon>Gammaproteobacteria</taxon>
        <taxon>Enterobacterales</taxon>
        <taxon>Enterobacteriaceae</taxon>
        <taxon>Escherichia</taxon>
    </lineage>
</organism>
<comment type="function">
    <text evidence="2">Large subunit of the glutamine-dependent carbamoyl phosphate synthetase (CPSase). CPSase catalyzes the formation of carbamoyl phosphate from the ammonia moiety of glutamine, carbonate, and phosphate donated by ATP, constituting the first step of 2 biosynthetic pathways, one leading to arginine and/or urea and the other to pyrimidine nucleotides. The large subunit (synthetase) binds the substrates ammonia (free or transferred from glutamine from the small subunit), hydrogencarbonate and ATP and carries out an ATP-coupled ligase reaction, activating hydrogencarbonate by forming carboxy phosphate which reacts with ammonia to form carbamoyl phosphate.</text>
</comment>
<comment type="catalytic activity">
    <reaction evidence="2">
        <text>hydrogencarbonate + L-glutamine + 2 ATP + H2O = carbamoyl phosphate + L-glutamate + 2 ADP + phosphate + 2 H(+)</text>
        <dbReference type="Rhea" id="RHEA:18633"/>
        <dbReference type="ChEBI" id="CHEBI:15377"/>
        <dbReference type="ChEBI" id="CHEBI:15378"/>
        <dbReference type="ChEBI" id="CHEBI:17544"/>
        <dbReference type="ChEBI" id="CHEBI:29985"/>
        <dbReference type="ChEBI" id="CHEBI:30616"/>
        <dbReference type="ChEBI" id="CHEBI:43474"/>
        <dbReference type="ChEBI" id="CHEBI:58228"/>
        <dbReference type="ChEBI" id="CHEBI:58359"/>
        <dbReference type="ChEBI" id="CHEBI:456216"/>
        <dbReference type="EC" id="6.3.5.5"/>
    </reaction>
</comment>
<comment type="catalytic activity">
    <molecule>Carbamoyl phosphate synthase large chain</molecule>
    <reaction evidence="2">
        <text>hydrogencarbonate + NH4(+) + 2 ATP = carbamoyl phosphate + 2 ADP + phosphate + 2 H(+)</text>
        <dbReference type="Rhea" id="RHEA:18029"/>
        <dbReference type="ChEBI" id="CHEBI:15378"/>
        <dbReference type="ChEBI" id="CHEBI:17544"/>
        <dbReference type="ChEBI" id="CHEBI:28938"/>
        <dbReference type="ChEBI" id="CHEBI:30616"/>
        <dbReference type="ChEBI" id="CHEBI:43474"/>
        <dbReference type="ChEBI" id="CHEBI:58228"/>
        <dbReference type="ChEBI" id="CHEBI:456216"/>
        <dbReference type="EC" id="6.3.4.16"/>
    </reaction>
</comment>
<comment type="cofactor">
    <cofactor evidence="2">
        <name>Mg(2+)</name>
        <dbReference type="ChEBI" id="CHEBI:18420"/>
    </cofactor>
    <cofactor evidence="2">
        <name>Mn(2+)</name>
        <dbReference type="ChEBI" id="CHEBI:29035"/>
    </cofactor>
    <text evidence="2">Binds 4 Mg(2+) or Mn(2+) ions per subunit.</text>
</comment>
<comment type="pathway">
    <text evidence="2">Amino-acid biosynthesis; L-arginine biosynthesis; carbamoyl phosphate from bicarbonate: step 1/1.</text>
</comment>
<comment type="pathway">
    <text evidence="2">Pyrimidine metabolism; UMP biosynthesis via de novo pathway; (S)-dihydroorotate from bicarbonate: step 1/3.</text>
</comment>
<comment type="subunit">
    <text evidence="2">Composed of two chains; the small (or glutamine) chain promotes the hydrolysis of glutamine to ammonia, which is used by the large (or ammonia) chain to synthesize carbamoyl phosphate. Tetramer of heterodimers (alpha,beta)4.</text>
</comment>
<comment type="domain">
    <text evidence="2">The large subunit is composed of 2 ATP-grasp domains that are involved in binding the 2 ATP molecules needed for carbamoyl phosphate synthesis. The N-terminal ATP-grasp domain (referred to as the carboxyphosphate synthetic component) catalyzes the ATP-dependent phosphorylation of hydrogencarbonate to carboxyphosphate and the subsequent nucleophilic attack by ammonia to form a carbamate intermediate. The C-terminal ATP-grasp domain (referred to as the carbamoyl phosphate synthetic component) then catalyzes the phosphorylation of carbamate with the second ATP to form the end product carbamoyl phosphate. The reactive and unstable enzyme intermediates are sequentially channeled from one active site to the next through the interior of the protein over a distance of at least 96 A.</text>
</comment>
<comment type="similarity">
    <text evidence="2 3">Belongs to the CarB family.</text>
</comment>
<accession>P63737</accession>
<accession>Q8XA38</accession>
<evidence type="ECO:0000250" key="1"/>
<evidence type="ECO:0000255" key="2">
    <source>
        <dbReference type="HAMAP-Rule" id="MF_01210"/>
    </source>
</evidence>
<evidence type="ECO:0000305" key="3"/>
<feature type="initiator methionine" description="Removed" evidence="1">
    <location>
        <position position="1"/>
    </location>
</feature>
<feature type="chain" id="PRO_0000145006" description="Carbamoyl phosphate synthase large chain">
    <location>
        <begin position="2"/>
        <end position="1073"/>
    </location>
</feature>
<feature type="domain" description="ATP-grasp 1" evidence="2">
    <location>
        <begin position="133"/>
        <end position="328"/>
    </location>
</feature>
<feature type="domain" description="ATP-grasp 2" evidence="2">
    <location>
        <begin position="679"/>
        <end position="870"/>
    </location>
</feature>
<feature type="domain" description="MGS-like" evidence="2">
    <location>
        <begin position="937"/>
        <end position="1073"/>
    </location>
</feature>
<feature type="region of interest" description="Carboxyphosphate synthetic domain" evidence="2">
    <location>
        <begin position="2"/>
        <end position="403"/>
    </location>
</feature>
<feature type="region of interest" description="Oligomerization domain" evidence="2">
    <location>
        <begin position="404"/>
        <end position="553"/>
    </location>
</feature>
<feature type="region of interest" description="Carbamoyl phosphate synthetic domain" evidence="2">
    <location>
        <begin position="554"/>
        <end position="936"/>
    </location>
</feature>
<feature type="region of interest" description="Allosteric domain" evidence="2">
    <location>
        <begin position="937"/>
        <end position="1073"/>
    </location>
</feature>
<feature type="binding site" evidence="2">
    <location>
        <position position="129"/>
    </location>
    <ligand>
        <name>ATP</name>
        <dbReference type="ChEBI" id="CHEBI:30616"/>
        <label>1</label>
    </ligand>
</feature>
<feature type="binding site" evidence="2">
    <location>
        <position position="169"/>
    </location>
    <ligand>
        <name>ATP</name>
        <dbReference type="ChEBI" id="CHEBI:30616"/>
        <label>1</label>
    </ligand>
</feature>
<feature type="binding site" evidence="2">
    <location>
        <position position="175"/>
    </location>
    <ligand>
        <name>ATP</name>
        <dbReference type="ChEBI" id="CHEBI:30616"/>
        <label>1</label>
    </ligand>
</feature>
<feature type="binding site" evidence="2">
    <location>
        <position position="176"/>
    </location>
    <ligand>
        <name>ATP</name>
        <dbReference type="ChEBI" id="CHEBI:30616"/>
        <label>1</label>
    </ligand>
</feature>
<feature type="binding site" evidence="2">
    <location>
        <position position="208"/>
    </location>
    <ligand>
        <name>ATP</name>
        <dbReference type="ChEBI" id="CHEBI:30616"/>
        <label>1</label>
    </ligand>
</feature>
<feature type="binding site" evidence="2">
    <location>
        <position position="210"/>
    </location>
    <ligand>
        <name>ATP</name>
        <dbReference type="ChEBI" id="CHEBI:30616"/>
        <label>1</label>
    </ligand>
</feature>
<feature type="binding site" evidence="2">
    <location>
        <position position="215"/>
    </location>
    <ligand>
        <name>ATP</name>
        <dbReference type="ChEBI" id="CHEBI:30616"/>
        <label>1</label>
    </ligand>
</feature>
<feature type="binding site" evidence="2">
    <location>
        <position position="241"/>
    </location>
    <ligand>
        <name>ATP</name>
        <dbReference type="ChEBI" id="CHEBI:30616"/>
        <label>1</label>
    </ligand>
</feature>
<feature type="binding site" evidence="2">
    <location>
        <position position="242"/>
    </location>
    <ligand>
        <name>ATP</name>
        <dbReference type="ChEBI" id="CHEBI:30616"/>
        <label>1</label>
    </ligand>
</feature>
<feature type="binding site" evidence="2">
    <location>
        <position position="243"/>
    </location>
    <ligand>
        <name>ATP</name>
        <dbReference type="ChEBI" id="CHEBI:30616"/>
        <label>1</label>
    </ligand>
</feature>
<feature type="binding site" evidence="2">
    <location>
        <position position="285"/>
    </location>
    <ligand>
        <name>ATP</name>
        <dbReference type="ChEBI" id="CHEBI:30616"/>
        <label>1</label>
    </ligand>
</feature>
<feature type="binding site" evidence="2">
    <location>
        <position position="285"/>
    </location>
    <ligand>
        <name>Mg(2+)</name>
        <dbReference type="ChEBI" id="CHEBI:18420"/>
        <label>1</label>
    </ligand>
</feature>
<feature type="binding site" evidence="2">
    <location>
        <position position="285"/>
    </location>
    <ligand>
        <name>Mn(2+)</name>
        <dbReference type="ChEBI" id="CHEBI:29035"/>
        <label>1</label>
    </ligand>
</feature>
<feature type="binding site" evidence="2">
    <location>
        <position position="299"/>
    </location>
    <ligand>
        <name>ATP</name>
        <dbReference type="ChEBI" id="CHEBI:30616"/>
        <label>1</label>
    </ligand>
</feature>
<feature type="binding site" evidence="2">
    <location>
        <position position="299"/>
    </location>
    <ligand>
        <name>Mg(2+)</name>
        <dbReference type="ChEBI" id="CHEBI:18420"/>
        <label>1</label>
    </ligand>
</feature>
<feature type="binding site" evidence="2">
    <location>
        <position position="299"/>
    </location>
    <ligand>
        <name>Mg(2+)</name>
        <dbReference type="ChEBI" id="CHEBI:18420"/>
        <label>2</label>
    </ligand>
</feature>
<feature type="binding site" evidence="2">
    <location>
        <position position="299"/>
    </location>
    <ligand>
        <name>Mn(2+)</name>
        <dbReference type="ChEBI" id="CHEBI:29035"/>
        <label>1</label>
    </ligand>
</feature>
<feature type="binding site" evidence="2">
    <location>
        <position position="299"/>
    </location>
    <ligand>
        <name>Mn(2+)</name>
        <dbReference type="ChEBI" id="CHEBI:29035"/>
        <label>2</label>
    </ligand>
</feature>
<feature type="binding site" evidence="2">
    <location>
        <position position="301"/>
    </location>
    <ligand>
        <name>Mg(2+)</name>
        <dbReference type="ChEBI" id="CHEBI:18420"/>
        <label>2</label>
    </ligand>
</feature>
<feature type="binding site" evidence="2">
    <location>
        <position position="301"/>
    </location>
    <ligand>
        <name>Mn(2+)</name>
        <dbReference type="ChEBI" id="CHEBI:29035"/>
        <label>2</label>
    </ligand>
</feature>
<feature type="binding site" evidence="2">
    <location>
        <position position="715"/>
    </location>
    <ligand>
        <name>ATP</name>
        <dbReference type="ChEBI" id="CHEBI:30616"/>
        <label>2</label>
    </ligand>
</feature>
<feature type="binding site" evidence="2">
    <location>
        <position position="754"/>
    </location>
    <ligand>
        <name>ATP</name>
        <dbReference type="ChEBI" id="CHEBI:30616"/>
        <label>2</label>
    </ligand>
</feature>
<feature type="binding site" evidence="2">
    <location>
        <position position="756"/>
    </location>
    <ligand>
        <name>ATP</name>
        <dbReference type="ChEBI" id="CHEBI:30616"/>
        <label>2</label>
    </ligand>
</feature>
<feature type="binding site" evidence="2">
    <location>
        <position position="761"/>
    </location>
    <ligand>
        <name>ATP</name>
        <dbReference type="ChEBI" id="CHEBI:30616"/>
        <label>2</label>
    </ligand>
</feature>
<feature type="binding site" evidence="2">
    <location>
        <position position="786"/>
    </location>
    <ligand>
        <name>ATP</name>
        <dbReference type="ChEBI" id="CHEBI:30616"/>
        <label>2</label>
    </ligand>
</feature>
<feature type="binding site" evidence="2">
    <location>
        <position position="787"/>
    </location>
    <ligand>
        <name>ATP</name>
        <dbReference type="ChEBI" id="CHEBI:30616"/>
        <label>2</label>
    </ligand>
</feature>
<feature type="binding site" evidence="2">
    <location>
        <position position="788"/>
    </location>
    <ligand>
        <name>ATP</name>
        <dbReference type="ChEBI" id="CHEBI:30616"/>
        <label>2</label>
    </ligand>
</feature>
<feature type="binding site" evidence="2">
    <location>
        <position position="789"/>
    </location>
    <ligand>
        <name>ATP</name>
        <dbReference type="ChEBI" id="CHEBI:30616"/>
        <label>2</label>
    </ligand>
</feature>
<feature type="binding site" evidence="2">
    <location>
        <position position="829"/>
    </location>
    <ligand>
        <name>ATP</name>
        <dbReference type="ChEBI" id="CHEBI:30616"/>
        <label>2</label>
    </ligand>
</feature>
<feature type="binding site" evidence="2">
    <location>
        <position position="829"/>
    </location>
    <ligand>
        <name>Mg(2+)</name>
        <dbReference type="ChEBI" id="CHEBI:18420"/>
        <label>3</label>
    </ligand>
</feature>
<feature type="binding site" evidence="2">
    <location>
        <position position="829"/>
    </location>
    <ligand>
        <name>Mn(2+)</name>
        <dbReference type="ChEBI" id="CHEBI:29035"/>
        <label>3</label>
    </ligand>
</feature>
<feature type="binding site" evidence="2">
    <location>
        <position position="841"/>
    </location>
    <ligand>
        <name>ATP</name>
        <dbReference type="ChEBI" id="CHEBI:30616"/>
        <label>2</label>
    </ligand>
</feature>
<feature type="binding site" evidence="2">
    <location>
        <position position="841"/>
    </location>
    <ligand>
        <name>Mg(2+)</name>
        <dbReference type="ChEBI" id="CHEBI:18420"/>
        <label>3</label>
    </ligand>
</feature>
<feature type="binding site" evidence="2">
    <location>
        <position position="841"/>
    </location>
    <ligand>
        <name>Mg(2+)</name>
        <dbReference type="ChEBI" id="CHEBI:18420"/>
        <label>4</label>
    </ligand>
</feature>
<feature type="binding site" evidence="2">
    <location>
        <position position="841"/>
    </location>
    <ligand>
        <name>Mn(2+)</name>
        <dbReference type="ChEBI" id="CHEBI:29035"/>
        <label>3</label>
    </ligand>
</feature>
<feature type="binding site" evidence="2">
    <location>
        <position position="841"/>
    </location>
    <ligand>
        <name>Mn(2+)</name>
        <dbReference type="ChEBI" id="CHEBI:29035"/>
        <label>4</label>
    </ligand>
</feature>
<feature type="binding site" evidence="2">
    <location>
        <position position="843"/>
    </location>
    <ligand>
        <name>Mg(2+)</name>
        <dbReference type="ChEBI" id="CHEBI:18420"/>
        <label>4</label>
    </ligand>
</feature>
<feature type="binding site" evidence="2">
    <location>
        <position position="843"/>
    </location>
    <ligand>
        <name>Mn(2+)</name>
        <dbReference type="ChEBI" id="CHEBI:29035"/>
        <label>4</label>
    </ligand>
</feature>
<dbReference type="EC" id="6.3.4.16" evidence="2"/>
<dbReference type="EC" id="6.3.5.5" evidence="2"/>
<dbReference type="EMBL" id="AE005174">
    <property type="protein sequence ID" value="AAG54335.1"/>
    <property type="molecule type" value="Genomic_DNA"/>
</dbReference>
<dbReference type="EMBL" id="BA000007">
    <property type="protein sequence ID" value="BAB33459.1"/>
    <property type="molecule type" value="Genomic_DNA"/>
</dbReference>
<dbReference type="PIR" id="C85484">
    <property type="entry name" value="C85484"/>
</dbReference>
<dbReference type="PIR" id="D90633">
    <property type="entry name" value="D90633"/>
</dbReference>
<dbReference type="RefSeq" id="NP_308063.1">
    <property type="nucleotide sequence ID" value="NC_002695.1"/>
</dbReference>
<dbReference type="RefSeq" id="WP_001126371.1">
    <property type="nucleotide sequence ID" value="NZ_VOAI01000002.1"/>
</dbReference>
<dbReference type="SMR" id="P63737"/>
<dbReference type="STRING" id="155864.Z0038"/>
<dbReference type="GeneID" id="913432"/>
<dbReference type="KEGG" id="ece:Z0038"/>
<dbReference type="KEGG" id="ecs:ECs_0036"/>
<dbReference type="PATRIC" id="fig|386585.9.peg.132"/>
<dbReference type="eggNOG" id="COG0458">
    <property type="taxonomic scope" value="Bacteria"/>
</dbReference>
<dbReference type="HOGENOM" id="CLU_000513_1_0_6"/>
<dbReference type="OMA" id="FPFNKFP"/>
<dbReference type="UniPathway" id="UPA00068">
    <property type="reaction ID" value="UER00171"/>
</dbReference>
<dbReference type="UniPathway" id="UPA00070">
    <property type="reaction ID" value="UER00115"/>
</dbReference>
<dbReference type="Proteomes" id="UP000000558">
    <property type="component" value="Chromosome"/>
</dbReference>
<dbReference type="Proteomes" id="UP000002519">
    <property type="component" value="Chromosome"/>
</dbReference>
<dbReference type="GO" id="GO:0005737">
    <property type="term" value="C:cytoplasm"/>
    <property type="evidence" value="ECO:0007669"/>
    <property type="project" value="TreeGrafter"/>
</dbReference>
<dbReference type="GO" id="GO:0005524">
    <property type="term" value="F:ATP binding"/>
    <property type="evidence" value="ECO:0007669"/>
    <property type="project" value="UniProtKB-UniRule"/>
</dbReference>
<dbReference type="GO" id="GO:0004087">
    <property type="term" value="F:carbamoyl-phosphate synthase (ammonia) activity"/>
    <property type="evidence" value="ECO:0007669"/>
    <property type="project" value="RHEA"/>
</dbReference>
<dbReference type="GO" id="GO:0004088">
    <property type="term" value="F:carbamoyl-phosphate synthase (glutamine-hydrolyzing) activity"/>
    <property type="evidence" value="ECO:0007669"/>
    <property type="project" value="UniProtKB-UniRule"/>
</dbReference>
<dbReference type="GO" id="GO:0046872">
    <property type="term" value="F:metal ion binding"/>
    <property type="evidence" value="ECO:0007669"/>
    <property type="project" value="UniProtKB-KW"/>
</dbReference>
<dbReference type="GO" id="GO:0044205">
    <property type="term" value="P:'de novo' UMP biosynthetic process"/>
    <property type="evidence" value="ECO:0007669"/>
    <property type="project" value="UniProtKB-UniRule"/>
</dbReference>
<dbReference type="GO" id="GO:0006541">
    <property type="term" value="P:glutamine metabolic process"/>
    <property type="evidence" value="ECO:0007669"/>
    <property type="project" value="TreeGrafter"/>
</dbReference>
<dbReference type="GO" id="GO:0006526">
    <property type="term" value="P:L-arginine biosynthetic process"/>
    <property type="evidence" value="ECO:0007669"/>
    <property type="project" value="UniProtKB-UniRule"/>
</dbReference>
<dbReference type="CDD" id="cd01424">
    <property type="entry name" value="MGS_CPS_II"/>
    <property type="match status" value="1"/>
</dbReference>
<dbReference type="FunFam" id="1.10.1030.10:FF:000002">
    <property type="entry name" value="Carbamoyl-phosphate synthase large chain"/>
    <property type="match status" value="1"/>
</dbReference>
<dbReference type="FunFam" id="3.30.1490.20:FF:000001">
    <property type="entry name" value="Carbamoyl-phosphate synthase large chain"/>
    <property type="match status" value="1"/>
</dbReference>
<dbReference type="FunFam" id="3.30.470.20:FF:000007">
    <property type="entry name" value="Carbamoyl-phosphate synthase large chain"/>
    <property type="match status" value="1"/>
</dbReference>
<dbReference type="FunFam" id="3.30.470.20:FF:000013">
    <property type="entry name" value="Carbamoyl-phosphate synthase large chain"/>
    <property type="match status" value="1"/>
</dbReference>
<dbReference type="FunFam" id="3.40.50.1380:FF:000004">
    <property type="entry name" value="Carbamoyl-phosphate synthase large chain"/>
    <property type="match status" value="1"/>
</dbReference>
<dbReference type="FunFam" id="3.40.50.20:FF:000001">
    <property type="entry name" value="Carbamoyl-phosphate synthase large chain"/>
    <property type="match status" value="1"/>
</dbReference>
<dbReference type="FunFam" id="3.40.50.20:FF:000003">
    <property type="entry name" value="Carbamoyl-phosphate synthase large chain"/>
    <property type="match status" value="1"/>
</dbReference>
<dbReference type="Gene3D" id="3.40.50.20">
    <property type="match status" value="2"/>
</dbReference>
<dbReference type="Gene3D" id="3.30.470.20">
    <property type="entry name" value="ATP-grasp fold, B domain"/>
    <property type="match status" value="2"/>
</dbReference>
<dbReference type="Gene3D" id="1.10.1030.10">
    <property type="entry name" value="Carbamoyl-phosphate synthetase, large subunit oligomerisation domain"/>
    <property type="match status" value="1"/>
</dbReference>
<dbReference type="Gene3D" id="3.40.50.1380">
    <property type="entry name" value="Methylglyoxal synthase-like domain"/>
    <property type="match status" value="1"/>
</dbReference>
<dbReference type="HAMAP" id="MF_01210_A">
    <property type="entry name" value="CPSase_L_chain_A"/>
    <property type="match status" value="1"/>
</dbReference>
<dbReference type="HAMAP" id="MF_01210_B">
    <property type="entry name" value="CPSase_L_chain_B"/>
    <property type="match status" value="1"/>
</dbReference>
<dbReference type="InterPro" id="IPR011761">
    <property type="entry name" value="ATP-grasp"/>
</dbReference>
<dbReference type="InterPro" id="IPR006275">
    <property type="entry name" value="CarbamoylP_synth_lsu"/>
</dbReference>
<dbReference type="InterPro" id="IPR005480">
    <property type="entry name" value="CarbamoylP_synth_lsu_oligo"/>
</dbReference>
<dbReference type="InterPro" id="IPR036897">
    <property type="entry name" value="CarbamoylP_synth_lsu_oligo_sf"/>
</dbReference>
<dbReference type="InterPro" id="IPR005479">
    <property type="entry name" value="CbamoylP_synth_lsu-like_ATP-bd"/>
</dbReference>
<dbReference type="InterPro" id="IPR005483">
    <property type="entry name" value="CbamoylP_synth_lsu_CPSase_dom"/>
</dbReference>
<dbReference type="InterPro" id="IPR011607">
    <property type="entry name" value="MGS-like_dom"/>
</dbReference>
<dbReference type="InterPro" id="IPR036914">
    <property type="entry name" value="MGS-like_dom_sf"/>
</dbReference>
<dbReference type="InterPro" id="IPR033937">
    <property type="entry name" value="MGS_CPS_CarB"/>
</dbReference>
<dbReference type="InterPro" id="IPR016185">
    <property type="entry name" value="PreATP-grasp_dom_sf"/>
</dbReference>
<dbReference type="NCBIfam" id="TIGR01369">
    <property type="entry name" value="CPSaseII_lrg"/>
    <property type="match status" value="1"/>
</dbReference>
<dbReference type="NCBIfam" id="NF003671">
    <property type="entry name" value="PRK05294.1"/>
    <property type="match status" value="1"/>
</dbReference>
<dbReference type="NCBIfam" id="NF009455">
    <property type="entry name" value="PRK12815.1"/>
    <property type="match status" value="1"/>
</dbReference>
<dbReference type="PANTHER" id="PTHR11405:SF53">
    <property type="entry name" value="CARBAMOYL-PHOSPHATE SYNTHASE [AMMONIA], MITOCHONDRIAL"/>
    <property type="match status" value="1"/>
</dbReference>
<dbReference type="PANTHER" id="PTHR11405">
    <property type="entry name" value="CARBAMOYLTRANSFERASE FAMILY MEMBER"/>
    <property type="match status" value="1"/>
</dbReference>
<dbReference type="Pfam" id="PF02786">
    <property type="entry name" value="CPSase_L_D2"/>
    <property type="match status" value="2"/>
</dbReference>
<dbReference type="Pfam" id="PF02787">
    <property type="entry name" value="CPSase_L_D3"/>
    <property type="match status" value="1"/>
</dbReference>
<dbReference type="Pfam" id="PF02142">
    <property type="entry name" value="MGS"/>
    <property type="match status" value="1"/>
</dbReference>
<dbReference type="PRINTS" id="PR00098">
    <property type="entry name" value="CPSASE"/>
</dbReference>
<dbReference type="SMART" id="SM01096">
    <property type="entry name" value="CPSase_L_D3"/>
    <property type="match status" value="1"/>
</dbReference>
<dbReference type="SMART" id="SM00851">
    <property type="entry name" value="MGS"/>
    <property type="match status" value="1"/>
</dbReference>
<dbReference type="SUPFAM" id="SSF48108">
    <property type="entry name" value="Carbamoyl phosphate synthetase, large subunit connection domain"/>
    <property type="match status" value="1"/>
</dbReference>
<dbReference type="SUPFAM" id="SSF56059">
    <property type="entry name" value="Glutathione synthetase ATP-binding domain-like"/>
    <property type="match status" value="2"/>
</dbReference>
<dbReference type="SUPFAM" id="SSF52335">
    <property type="entry name" value="Methylglyoxal synthase-like"/>
    <property type="match status" value="1"/>
</dbReference>
<dbReference type="SUPFAM" id="SSF52440">
    <property type="entry name" value="PreATP-grasp domain"/>
    <property type="match status" value="2"/>
</dbReference>
<dbReference type="PROSITE" id="PS50975">
    <property type="entry name" value="ATP_GRASP"/>
    <property type="match status" value="2"/>
</dbReference>
<dbReference type="PROSITE" id="PS00866">
    <property type="entry name" value="CPSASE_1"/>
    <property type="match status" value="2"/>
</dbReference>
<dbReference type="PROSITE" id="PS00867">
    <property type="entry name" value="CPSASE_2"/>
    <property type="match status" value="2"/>
</dbReference>
<dbReference type="PROSITE" id="PS51855">
    <property type="entry name" value="MGS"/>
    <property type="match status" value="1"/>
</dbReference>
<gene>
    <name evidence="2" type="primary">carB</name>
    <name type="ordered locus">Z0038</name>
    <name type="ordered locus">ECs0036</name>
</gene>
<sequence>MPKRTDIKSILILGAGPIVIGQACEFDYSGAQACKALREEGYRVILVNSNPATIMTDPEMADATYIEPIHWEVVRKIIEKERPDAVLPTMGGQTALNCALELERQGVLEEFGVTMIGATADAIDKAEDRRRFDVAMKKIGLETARSGIAHTMEEALAVAADVGFPCIIRPSFTMGGSGGGIAYNREEFEEICARGLDLSPTKELLIDESLIGWKEYEMEVVRDKNDNCIIVCSIENFDAMGIHTGDSITVAPAQTLTDKEYQIMRNASMAVLREIGVETGGSNVQFAVNPKNGRLIVIEMNPRVSRSSALASKATGFPIAKVAAKLAVGYTLDELMNDITGGRTPASFEPSIDYVVTKIPRFNFEKFAGANDRLTTQMKSVGEVMAIGRTQQESLQKALRGLEVGATGFDPKVSLDDPEALTKIRRELKDAGAERIWYIADAFRAGLSVDGVFNLTNIDRWFLVQIEELVRLEEKVAEVGITGLNAEFLRQLKRKGFADARLAKLAGVREAEIRKLRDQYDLHPVYKRVDTCAAEFATDTAYMYSTYEEECEANPSTDREKIMVLGGGPNRIGQGIEFDYCCVHASLALREDGYETIMVNCNPETVSTDYDTSDRLYFEPVTLEDVLEIVRIEKPKGVIVQYGGQTPLKLARALEAAGVPVIGTSPDAIDRAEDRERFQHAVDRLKLKQPANATVTAIEMAVEKAKEIGYPLVVRPSYVLGGRAMEIVYDEADLRRYFQTAVSVSNDAPVLLDHFLDDAVEVDVDAICDGEMVLIGGIMEHIEQAGVHSGDSACSLPAYTLSQEIQDVMRQQVQKLAFELQVRGLMNVQFAVKNNEVYLIEVNPRAARTVPFVSKATGVPLAKVAARVMAGKSLAEQGVTKEVIPPYYSVKEVVLPFNKFPGVDPLLGPEMRSTGEVMGVGRTFAEAFAKAQLGSNSTMKKHGRALLSVREGDKERVVDLAAKLLKQGFELDATHGTAIVLGEAGINPRLVNKVHEGRPHIQDRIKNGEYTYIINTTSGRRAIEDSRVIRRSALQYKVHYDTTLNGGFATAMALNADATEKVISVQEMHAQIK</sequence>